<comment type="function">
    <text evidence="1">Catalyzes the NADPH-dependent reduction of glutamyl-tRNA(Glu) to glutamate 1-semialdehyde (GSA).</text>
</comment>
<comment type="catalytic activity">
    <reaction evidence="1">
        <text>(S)-4-amino-5-oxopentanoate + tRNA(Glu) + NADP(+) = L-glutamyl-tRNA(Glu) + NADPH + H(+)</text>
        <dbReference type="Rhea" id="RHEA:12344"/>
        <dbReference type="Rhea" id="RHEA-COMP:9663"/>
        <dbReference type="Rhea" id="RHEA-COMP:9680"/>
        <dbReference type="ChEBI" id="CHEBI:15378"/>
        <dbReference type="ChEBI" id="CHEBI:57501"/>
        <dbReference type="ChEBI" id="CHEBI:57783"/>
        <dbReference type="ChEBI" id="CHEBI:58349"/>
        <dbReference type="ChEBI" id="CHEBI:78442"/>
        <dbReference type="ChEBI" id="CHEBI:78520"/>
        <dbReference type="EC" id="1.2.1.70"/>
    </reaction>
</comment>
<comment type="pathway">
    <text evidence="1">Porphyrin-containing compound metabolism; protoporphyrin-IX biosynthesis; 5-aminolevulinate from L-glutamyl-tRNA(Glu): step 1/2.</text>
</comment>
<comment type="subunit">
    <text evidence="1">Homodimer.</text>
</comment>
<comment type="domain">
    <text evidence="1">Possesses an unusual extended V-shaped dimeric structure with each monomer consisting of three distinct domains arranged along a curved 'spinal' alpha-helix. The N-terminal catalytic domain specifically recognizes the glutamate moiety of the substrate. The second domain is the NADPH-binding domain, and the third C-terminal domain is responsible for dimerization.</text>
</comment>
<comment type="miscellaneous">
    <text evidence="1">During catalysis, the active site Cys acts as a nucleophile attacking the alpha-carbonyl group of tRNA-bound glutamate with the formation of a thioester intermediate between enzyme and glutamate, and the concomitant release of tRNA(Glu). The thioester intermediate is finally reduced by direct hydride transfer from NADPH, to form the product GSA.</text>
</comment>
<comment type="similarity">
    <text evidence="1">Belongs to the glutamyl-tRNA reductase family.</text>
</comment>
<organism>
    <name type="scientific">Marinomonas sp. (strain MWYL1)</name>
    <dbReference type="NCBI Taxonomy" id="400668"/>
    <lineage>
        <taxon>Bacteria</taxon>
        <taxon>Pseudomonadati</taxon>
        <taxon>Pseudomonadota</taxon>
        <taxon>Gammaproteobacteria</taxon>
        <taxon>Oceanospirillales</taxon>
        <taxon>Oceanospirillaceae</taxon>
        <taxon>Marinomonas</taxon>
    </lineage>
</organism>
<gene>
    <name evidence="1" type="primary">hemA</name>
    <name type="ordered locus">Mmwyl1_3600</name>
</gene>
<keyword id="KW-0521">NADP</keyword>
<keyword id="KW-0560">Oxidoreductase</keyword>
<keyword id="KW-0627">Porphyrin biosynthesis</keyword>
<dbReference type="EC" id="1.2.1.70" evidence="1"/>
<dbReference type="EMBL" id="CP000749">
    <property type="protein sequence ID" value="ABR72502.1"/>
    <property type="molecule type" value="Genomic_DNA"/>
</dbReference>
<dbReference type="SMR" id="A6W1C3"/>
<dbReference type="STRING" id="400668.Mmwyl1_3600"/>
<dbReference type="KEGG" id="mmw:Mmwyl1_3600"/>
<dbReference type="eggNOG" id="COG0373">
    <property type="taxonomic scope" value="Bacteria"/>
</dbReference>
<dbReference type="HOGENOM" id="CLU_035113_2_2_6"/>
<dbReference type="OrthoDB" id="110209at2"/>
<dbReference type="UniPathway" id="UPA00251">
    <property type="reaction ID" value="UER00316"/>
</dbReference>
<dbReference type="GO" id="GO:0008883">
    <property type="term" value="F:glutamyl-tRNA reductase activity"/>
    <property type="evidence" value="ECO:0007669"/>
    <property type="project" value="UniProtKB-UniRule"/>
</dbReference>
<dbReference type="GO" id="GO:0050661">
    <property type="term" value="F:NADP binding"/>
    <property type="evidence" value="ECO:0007669"/>
    <property type="project" value="InterPro"/>
</dbReference>
<dbReference type="GO" id="GO:0019353">
    <property type="term" value="P:protoporphyrinogen IX biosynthetic process from glutamate"/>
    <property type="evidence" value="ECO:0007669"/>
    <property type="project" value="TreeGrafter"/>
</dbReference>
<dbReference type="CDD" id="cd05213">
    <property type="entry name" value="NAD_bind_Glutamyl_tRNA_reduct"/>
    <property type="match status" value="1"/>
</dbReference>
<dbReference type="FunFam" id="3.30.460.30:FF:000001">
    <property type="entry name" value="Glutamyl-tRNA reductase"/>
    <property type="match status" value="1"/>
</dbReference>
<dbReference type="FunFam" id="3.40.50.720:FF:000031">
    <property type="entry name" value="Glutamyl-tRNA reductase"/>
    <property type="match status" value="1"/>
</dbReference>
<dbReference type="Gene3D" id="3.30.460.30">
    <property type="entry name" value="Glutamyl-tRNA reductase, N-terminal domain"/>
    <property type="match status" value="1"/>
</dbReference>
<dbReference type="Gene3D" id="3.40.50.720">
    <property type="entry name" value="NAD(P)-binding Rossmann-like Domain"/>
    <property type="match status" value="1"/>
</dbReference>
<dbReference type="HAMAP" id="MF_00087">
    <property type="entry name" value="Glu_tRNA_reductase"/>
    <property type="match status" value="1"/>
</dbReference>
<dbReference type="InterPro" id="IPR000343">
    <property type="entry name" value="4pyrrol_synth_GluRdtase"/>
</dbReference>
<dbReference type="InterPro" id="IPR015896">
    <property type="entry name" value="4pyrrol_synth_GluRdtase_dimer"/>
</dbReference>
<dbReference type="InterPro" id="IPR015895">
    <property type="entry name" value="4pyrrol_synth_GluRdtase_N"/>
</dbReference>
<dbReference type="InterPro" id="IPR018214">
    <property type="entry name" value="GluRdtase_CS"/>
</dbReference>
<dbReference type="InterPro" id="IPR036453">
    <property type="entry name" value="GluRdtase_dimer_dom_sf"/>
</dbReference>
<dbReference type="InterPro" id="IPR036343">
    <property type="entry name" value="GluRdtase_N_sf"/>
</dbReference>
<dbReference type="InterPro" id="IPR036291">
    <property type="entry name" value="NAD(P)-bd_dom_sf"/>
</dbReference>
<dbReference type="InterPro" id="IPR006151">
    <property type="entry name" value="Shikm_DH/Glu-tRNA_Rdtase"/>
</dbReference>
<dbReference type="NCBIfam" id="TIGR01035">
    <property type="entry name" value="hemA"/>
    <property type="match status" value="1"/>
</dbReference>
<dbReference type="PANTHER" id="PTHR43013">
    <property type="entry name" value="GLUTAMYL-TRNA REDUCTASE"/>
    <property type="match status" value="1"/>
</dbReference>
<dbReference type="PANTHER" id="PTHR43013:SF1">
    <property type="entry name" value="GLUTAMYL-TRNA REDUCTASE"/>
    <property type="match status" value="1"/>
</dbReference>
<dbReference type="Pfam" id="PF00745">
    <property type="entry name" value="GlutR_dimer"/>
    <property type="match status" value="1"/>
</dbReference>
<dbReference type="Pfam" id="PF05201">
    <property type="entry name" value="GlutR_N"/>
    <property type="match status" value="1"/>
</dbReference>
<dbReference type="Pfam" id="PF01488">
    <property type="entry name" value="Shikimate_DH"/>
    <property type="match status" value="1"/>
</dbReference>
<dbReference type="PIRSF" id="PIRSF000445">
    <property type="entry name" value="4pyrrol_synth_GluRdtase"/>
    <property type="match status" value="1"/>
</dbReference>
<dbReference type="SUPFAM" id="SSF69742">
    <property type="entry name" value="Glutamyl tRNA-reductase catalytic, N-terminal domain"/>
    <property type="match status" value="1"/>
</dbReference>
<dbReference type="SUPFAM" id="SSF69075">
    <property type="entry name" value="Glutamyl tRNA-reductase dimerization domain"/>
    <property type="match status" value="1"/>
</dbReference>
<dbReference type="SUPFAM" id="SSF51735">
    <property type="entry name" value="NAD(P)-binding Rossmann-fold domains"/>
    <property type="match status" value="1"/>
</dbReference>
<dbReference type="PROSITE" id="PS00747">
    <property type="entry name" value="GLUTR"/>
    <property type="match status" value="1"/>
</dbReference>
<accession>A6W1C3</accession>
<reference key="1">
    <citation type="submission" date="2007-06" db="EMBL/GenBank/DDBJ databases">
        <title>Complete sequence of Marinomonas sp. MWYL1.</title>
        <authorList>
            <consortium name="US DOE Joint Genome Institute"/>
            <person name="Copeland A."/>
            <person name="Lucas S."/>
            <person name="Lapidus A."/>
            <person name="Barry K."/>
            <person name="Glavina del Rio T."/>
            <person name="Dalin E."/>
            <person name="Tice H."/>
            <person name="Pitluck S."/>
            <person name="Kiss H."/>
            <person name="Brettin T."/>
            <person name="Bruce D."/>
            <person name="Detter J.C."/>
            <person name="Han C."/>
            <person name="Schmutz J."/>
            <person name="Larimer F."/>
            <person name="Land M."/>
            <person name="Hauser L."/>
            <person name="Kyrpides N."/>
            <person name="Kim E."/>
            <person name="Johnston A.W.B."/>
            <person name="Todd J.D."/>
            <person name="Rogers R."/>
            <person name="Wexler M."/>
            <person name="Bond P.L."/>
            <person name="Li Y."/>
            <person name="Richardson P."/>
        </authorList>
    </citation>
    <scope>NUCLEOTIDE SEQUENCE [LARGE SCALE GENOMIC DNA]</scope>
    <source>
        <strain>MWYL1</strain>
    </source>
</reference>
<feature type="chain" id="PRO_1000075412" description="Glutamyl-tRNA reductase">
    <location>
        <begin position="1"/>
        <end position="422"/>
    </location>
</feature>
<feature type="active site" description="Nucleophile" evidence="1">
    <location>
        <position position="50"/>
    </location>
</feature>
<feature type="binding site" evidence="1">
    <location>
        <begin position="49"/>
        <end position="52"/>
    </location>
    <ligand>
        <name>substrate</name>
    </ligand>
</feature>
<feature type="binding site" evidence="1">
    <location>
        <position position="108"/>
    </location>
    <ligand>
        <name>substrate</name>
    </ligand>
</feature>
<feature type="binding site" evidence="1">
    <location>
        <begin position="113"/>
        <end position="115"/>
    </location>
    <ligand>
        <name>substrate</name>
    </ligand>
</feature>
<feature type="binding site" evidence="1">
    <location>
        <position position="119"/>
    </location>
    <ligand>
        <name>substrate</name>
    </ligand>
</feature>
<feature type="binding site" evidence="1">
    <location>
        <begin position="188"/>
        <end position="193"/>
    </location>
    <ligand>
        <name>NADP(+)</name>
        <dbReference type="ChEBI" id="CHEBI:58349"/>
    </ligand>
</feature>
<feature type="site" description="Important for activity" evidence="1">
    <location>
        <position position="98"/>
    </location>
</feature>
<evidence type="ECO:0000255" key="1">
    <source>
        <dbReference type="HAMAP-Rule" id="MF_00087"/>
    </source>
</evidence>
<name>HEM1_MARMS</name>
<protein>
    <recommendedName>
        <fullName evidence="1">Glutamyl-tRNA reductase</fullName>
        <shortName evidence="1">GluTR</shortName>
        <ecNumber evidence="1">1.2.1.70</ecNumber>
    </recommendedName>
</protein>
<proteinExistence type="inferred from homology"/>
<sequence length="422" mass="46233">MPLITVGINHKTAPVSIRERVAFAPEKMIDALSSLISENKANEAVIVSTCNRTELYCSVEDLSKVDDVIAWLGKYHGIALPELQQYCYTHADDDSVRHVMRVASGLDSLILGEPQILGQVKSAYAVSQEGSCIGPELESLFQRTFSVAKRVRTDTAIGENPVSIAFAAVSLAQRIFADIRNSTALLIGAGQTIELVARHLKENGIKHIIVANRTLARAQILADELNAEAIMLGDIGDYLSQADIVISSTASQLPIIGKGMVERATSQRRHSPMLLIDIAVPRDIEPEVEEVNDAYLYTVDDLHSVIEENVRARQDAAKAAEQMIEEGVDSYRRVVESRKVSDLIVTFRQSAEAIKNTELEKALKGLEMGQSPEQVLNKLAHGLMNKLIHAPTRYLRDAGADADQDALIIASNVLGIYEEKDN</sequence>